<gene>
    <name evidence="1" type="primary">miaB</name>
    <name type="ordered locus">SSP1468</name>
</gene>
<sequence length="513" mass="58499">MNEEQRKSTSIDILAERDKKTKDYSKYFEHVYQPPSLKEARKRGKEEVNYNDDFQIDEKYRNMGQGKTFLIKTYGCQMNAHDTEVMAGILGALGYTPTEDINHADVILINTCAIRENAENKVFSEIGNLKHLKKEKPETVIGVCGCMSQEESVVNKILKSYQNVDMIFGTHNIHRLPEILEEAYLSKAMVVEVWSKEGDVIENLPKVREGNIKAWVNIMYGCDKFCTYCIVPFTRGKERSRRPEDIIDEVRDLARQGYKEITLLGQNVNAYGKDIDGLAYGLGDLLEDISKIDIPRVRFTTSHPWDFTDRMIEVIANGGNIVPHVHLPVQSGNNAVLKIMGRKYTRESYLDLVNRIKTHIPNVALTTDIIVGYPNETDEQFEETLTLYDEVEFEHAYTYIYSQRDGTPAAKMNDNVPLDVKKDRLQQLNKKVACYSERAMQQYEGQTVQVLCEGVSKKDDTVLSGYTSKNKLVNFKAPKSMIGKIVNVYIDEAKQFSLNGTFISVNDKTVVTQ</sequence>
<accession>Q49X85</accession>
<protein>
    <recommendedName>
        <fullName evidence="1">tRNA-2-methylthio-N(6)-dimethylallyladenosine synthase</fullName>
        <ecNumber evidence="1">2.8.4.3</ecNumber>
    </recommendedName>
    <alternativeName>
        <fullName evidence="1">(Dimethylallyl)adenosine tRNA methylthiotransferase MiaB</fullName>
    </alternativeName>
    <alternativeName>
        <fullName evidence="1">tRNA-i(6)A37 methylthiotransferase</fullName>
    </alternativeName>
</protein>
<name>MIAB_STAS1</name>
<proteinExistence type="inferred from homology"/>
<evidence type="ECO:0000255" key="1">
    <source>
        <dbReference type="HAMAP-Rule" id="MF_01864"/>
    </source>
</evidence>
<evidence type="ECO:0000255" key="2">
    <source>
        <dbReference type="PROSITE-ProRule" id="PRU01266"/>
    </source>
</evidence>
<organism>
    <name type="scientific">Staphylococcus saprophyticus subsp. saprophyticus (strain ATCC 15305 / DSM 20229 / NCIMB 8711 / NCTC 7292 / S-41)</name>
    <dbReference type="NCBI Taxonomy" id="342451"/>
    <lineage>
        <taxon>Bacteria</taxon>
        <taxon>Bacillati</taxon>
        <taxon>Bacillota</taxon>
        <taxon>Bacilli</taxon>
        <taxon>Bacillales</taxon>
        <taxon>Staphylococcaceae</taxon>
        <taxon>Staphylococcus</taxon>
    </lineage>
</organism>
<comment type="function">
    <text evidence="1">Catalyzes the methylthiolation of N6-(dimethylallyl)adenosine (i(6)A), leading to the formation of 2-methylthio-N6-(dimethylallyl)adenosine (ms(2)i(6)A) at position 37 in tRNAs that read codons beginning with uridine.</text>
</comment>
<comment type="catalytic activity">
    <reaction evidence="1">
        <text>N(6)-dimethylallyladenosine(37) in tRNA + (sulfur carrier)-SH + AH2 + 2 S-adenosyl-L-methionine = 2-methylsulfanyl-N(6)-dimethylallyladenosine(37) in tRNA + (sulfur carrier)-H + 5'-deoxyadenosine + L-methionine + A + S-adenosyl-L-homocysteine + 2 H(+)</text>
        <dbReference type="Rhea" id="RHEA:37067"/>
        <dbReference type="Rhea" id="RHEA-COMP:10375"/>
        <dbReference type="Rhea" id="RHEA-COMP:10376"/>
        <dbReference type="Rhea" id="RHEA-COMP:14737"/>
        <dbReference type="Rhea" id="RHEA-COMP:14739"/>
        <dbReference type="ChEBI" id="CHEBI:13193"/>
        <dbReference type="ChEBI" id="CHEBI:15378"/>
        <dbReference type="ChEBI" id="CHEBI:17319"/>
        <dbReference type="ChEBI" id="CHEBI:17499"/>
        <dbReference type="ChEBI" id="CHEBI:29917"/>
        <dbReference type="ChEBI" id="CHEBI:57844"/>
        <dbReference type="ChEBI" id="CHEBI:57856"/>
        <dbReference type="ChEBI" id="CHEBI:59789"/>
        <dbReference type="ChEBI" id="CHEBI:64428"/>
        <dbReference type="ChEBI" id="CHEBI:74415"/>
        <dbReference type="ChEBI" id="CHEBI:74417"/>
        <dbReference type="EC" id="2.8.4.3"/>
    </reaction>
</comment>
<comment type="cofactor">
    <cofactor evidence="1">
        <name>[4Fe-4S] cluster</name>
        <dbReference type="ChEBI" id="CHEBI:49883"/>
    </cofactor>
    <text evidence="1">Binds 2 [4Fe-4S] clusters. One cluster is coordinated with 3 cysteines and an exchangeable S-adenosyl-L-methionine.</text>
</comment>
<comment type="subunit">
    <text evidence="1">Monomer.</text>
</comment>
<comment type="subcellular location">
    <subcellularLocation>
        <location evidence="1">Cytoplasm</location>
    </subcellularLocation>
</comment>
<comment type="similarity">
    <text evidence="1">Belongs to the methylthiotransferase family. MiaB subfamily.</text>
</comment>
<dbReference type="EC" id="2.8.4.3" evidence="1"/>
<dbReference type="EMBL" id="AP008934">
    <property type="protein sequence ID" value="BAE18613.1"/>
    <property type="molecule type" value="Genomic_DNA"/>
</dbReference>
<dbReference type="RefSeq" id="WP_011303234.1">
    <property type="nucleotide sequence ID" value="NC_007350.1"/>
</dbReference>
<dbReference type="SMR" id="Q49X85"/>
<dbReference type="DNASU" id="3615095"/>
<dbReference type="GeneID" id="3615095"/>
<dbReference type="KEGG" id="ssp:SSP1468"/>
<dbReference type="PATRIC" id="fig|342451.11.peg.1472"/>
<dbReference type="eggNOG" id="COG0621">
    <property type="taxonomic scope" value="Bacteria"/>
</dbReference>
<dbReference type="HOGENOM" id="CLU_018697_2_0_9"/>
<dbReference type="OrthoDB" id="9805215at2"/>
<dbReference type="Proteomes" id="UP000006371">
    <property type="component" value="Chromosome"/>
</dbReference>
<dbReference type="GO" id="GO:0005829">
    <property type="term" value="C:cytosol"/>
    <property type="evidence" value="ECO:0007669"/>
    <property type="project" value="TreeGrafter"/>
</dbReference>
<dbReference type="GO" id="GO:0051539">
    <property type="term" value="F:4 iron, 4 sulfur cluster binding"/>
    <property type="evidence" value="ECO:0007669"/>
    <property type="project" value="UniProtKB-UniRule"/>
</dbReference>
<dbReference type="GO" id="GO:0046872">
    <property type="term" value="F:metal ion binding"/>
    <property type="evidence" value="ECO:0007669"/>
    <property type="project" value="UniProtKB-KW"/>
</dbReference>
<dbReference type="GO" id="GO:0035597">
    <property type="term" value="F:N6-isopentenyladenosine methylthiotransferase activity"/>
    <property type="evidence" value="ECO:0007669"/>
    <property type="project" value="TreeGrafter"/>
</dbReference>
<dbReference type="CDD" id="cd01335">
    <property type="entry name" value="Radical_SAM"/>
    <property type="match status" value="1"/>
</dbReference>
<dbReference type="FunFam" id="3.40.50.12160:FF:000006">
    <property type="entry name" value="tRNA-2-methylthio-N(6)-dimethylallyladenosine synthase"/>
    <property type="match status" value="1"/>
</dbReference>
<dbReference type="FunFam" id="3.80.30.20:FF:000001">
    <property type="entry name" value="tRNA-2-methylthio-N(6)-dimethylallyladenosine synthase 2"/>
    <property type="match status" value="1"/>
</dbReference>
<dbReference type="Gene3D" id="3.40.50.12160">
    <property type="entry name" value="Methylthiotransferase, N-terminal domain"/>
    <property type="match status" value="1"/>
</dbReference>
<dbReference type="Gene3D" id="3.80.30.20">
    <property type="entry name" value="tm_1862 like domain"/>
    <property type="match status" value="1"/>
</dbReference>
<dbReference type="HAMAP" id="MF_01864">
    <property type="entry name" value="tRNA_metthiotr_MiaB"/>
    <property type="match status" value="1"/>
</dbReference>
<dbReference type="InterPro" id="IPR006638">
    <property type="entry name" value="Elp3/MiaA/NifB-like_rSAM"/>
</dbReference>
<dbReference type="InterPro" id="IPR005839">
    <property type="entry name" value="Methylthiotransferase"/>
</dbReference>
<dbReference type="InterPro" id="IPR020612">
    <property type="entry name" value="Methylthiotransferase_CS"/>
</dbReference>
<dbReference type="InterPro" id="IPR013848">
    <property type="entry name" value="Methylthiotransferase_N"/>
</dbReference>
<dbReference type="InterPro" id="IPR038135">
    <property type="entry name" value="Methylthiotransferase_N_sf"/>
</dbReference>
<dbReference type="InterPro" id="IPR006463">
    <property type="entry name" value="MiaB_methiolase"/>
</dbReference>
<dbReference type="InterPro" id="IPR007197">
    <property type="entry name" value="rSAM"/>
</dbReference>
<dbReference type="InterPro" id="IPR023404">
    <property type="entry name" value="rSAM_horseshoe"/>
</dbReference>
<dbReference type="InterPro" id="IPR002792">
    <property type="entry name" value="TRAM_dom"/>
</dbReference>
<dbReference type="NCBIfam" id="TIGR01574">
    <property type="entry name" value="miaB-methiolase"/>
    <property type="match status" value="1"/>
</dbReference>
<dbReference type="NCBIfam" id="TIGR00089">
    <property type="entry name" value="MiaB/RimO family radical SAM methylthiotransferase"/>
    <property type="match status" value="1"/>
</dbReference>
<dbReference type="PANTHER" id="PTHR43020">
    <property type="entry name" value="CDK5 REGULATORY SUBUNIT-ASSOCIATED PROTEIN 1"/>
    <property type="match status" value="1"/>
</dbReference>
<dbReference type="PANTHER" id="PTHR43020:SF2">
    <property type="entry name" value="MITOCHONDRIAL TRNA METHYLTHIOTRANSFERASE CDK5RAP1"/>
    <property type="match status" value="1"/>
</dbReference>
<dbReference type="Pfam" id="PF04055">
    <property type="entry name" value="Radical_SAM"/>
    <property type="match status" value="1"/>
</dbReference>
<dbReference type="Pfam" id="PF01938">
    <property type="entry name" value="TRAM"/>
    <property type="match status" value="1"/>
</dbReference>
<dbReference type="Pfam" id="PF00919">
    <property type="entry name" value="UPF0004"/>
    <property type="match status" value="1"/>
</dbReference>
<dbReference type="SFLD" id="SFLDF00273">
    <property type="entry name" value="(dimethylallyl)adenosine_tRNA"/>
    <property type="match status" value="1"/>
</dbReference>
<dbReference type="SFLD" id="SFLDG01082">
    <property type="entry name" value="B12-binding_domain_containing"/>
    <property type="match status" value="1"/>
</dbReference>
<dbReference type="SFLD" id="SFLDS00029">
    <property type="entry name" value="Radical_SAM"/>
    <property type="match status" value="1"/>
</dbReference>
<dbReference type="SMART" id="SM00729">
    <property type="entry name" value="Elp3"/>
    <property type="match status" value="1"/>
</dbReference>
<dbReference type="SUPFAM" id="SSF102114">
    <property type="entry name" value="Radical SAM enzymes"/>
    <property type="match status" value="1"/>
</dbReference>
<dbReference type="PROSITE" id="PS51449">
    <property type="entry name" value="MTTASE_N"/>
    <property type="match status" value="1"/>
</dbReference>
<dbReference type="PROSITE" id="PS01278">
    <property type="entry name" value="MTTASE_RADICAL"/>
    <property type="match status" value="1"/>
</dbReference>
<dbReference type="PROSITE" id="PS51918">
    <property type="entry name" value="RADICAL_SAM"/>
    <property type="match status" value="1"/>
</dbReference>
<dbReference type="PROSITE" id="PS50926">
    <property type="entry name" value="TRAM"/>
    <property type="match status" value="1"/>
</dbReference>
<feature type="chain" id="PRO_0000374581" description="tRNA-2-methylthio-N(6)-dimethylallyladenosine synthase">
    <location>
        <begin position="1"/>
        <end position="513"/>
    </location>
</feature>
<feature type="domain" description="MTTase N-terminal" evidence="1">
    <location>
        <begin position="67"/>
        <end position="185"/>
    </location>
</feature>
<feature type="domain" description="Radical SAM core" evidence="2">
    <location>
        <begin position="208"/>
        <end position="438"/>
    </location>
</feature>
<feature type="domain" description="TRAM" evidence="1">
    <location>
        <begin position="441"/>
        <end position="504"/>
    </location>
</feature>
<feature type="binding site" evidence="1">
    <location>
        <position position="76"/>
    </location>
    <ligand>
        <name>[4Fe-4S] cluster</name>
        <dbReference type="ChEBI" id="CHEBI:49883"/>
        <label>1</label>
    </ligand>
</feature>
<feature type="binding site" evidence="1">
    <location>
        <position position="112"/>
    </location>
    <ligand>
        <name>[4Fe-4S] cluster</name>
        <dbReference type="ChEBI" id="CHEBI:49883"/>
        <label>1</label>
    </ligand>
</feature>
<feature type="binding site" evidence="1">
    <location>
        <position position="146"/>
    </location>
    <ligand>
        <name>[4Fe-4S] cluster</name>
        <dbReference type="ChEBI" id="CHEBI:49883"/>
        <label>1</label>
    </ligand>
</feature>
<feature type="binding site" evidence="1">
    <location>
        <position position="222"/>
    </location>
    <ligand>
        <name>[4Fe-4S] cluster</name>
        <dbReference type="ChEBI" id="CHEBI:49883"/>
        <label>2</label>
        <note>4Fe-4S-S-AdoMet</note>
    </ligand>
</feature>
<feature type="binding site" evidence="1">
    <location>
        <position position="226"/>
    </location>
    <ligand>
        <name>[4Fe-4S] cluster</name>
        <dbReference type="ChEBI" id="CHEBI:49883"/>
        <label>2</label>
        <note>4Fe-4S-S-AdoMet</note>
    </ligand>
</feature>
<feature type="binding site" evidence="1">
    <location>
        <position position="229"/>
    </location>
    <ligand>
        <name>[4Fe-4S] cluster</name>
        <dbReference type="ChEBI" id="CHEBI:49883"/>
        <label>2</label>
        <note>4Fe-4S-S-AdoMet</note>
    </ligand>
</feature>
<keyword id="KW-0004">4Fe-4S</keyword>
<keyword id="KW-0963">Cytoplasm</keyword>
<keyword id="KW-0408">Iron</keyword>
<keyword id="KW-0411">Iron-sulfur</keyword>
<keyword id="KW-0479">Metal-binding</keyword>
<keyword id="KW-1185">Reference proteome</keyword>
<keyword id="KW-0949">S-adenosyl-L-methionine</keyword>
<keyword id="KW-0808">Transferase</keyword>
<keyword id="KW-0819">tRNA processing</keyword>
<reference key="1">
    <citation type="journal article" date="2005" name="Proc. Natl. Acad. Sci. U.S.A.">
        <title>Whole genome sequence of Staphylococcus saprophyticus reveals the pathogenesis of uncomplicated urinary tract infection.</title>
        <authorList>
            <person name="Kuroda M."/>
            <person name="Yamashita A."/>
            <person name="Hirakawa H."/>
            <person name="Kumano M."/>
            <person name="Morikawa K."/>
            <person name="Higashide M."/>
            <person name="Maruyama A."/>
            <person name="Inose Y."/>
            <person name="Matoba K."/>
            <person name="Toh H."/>
            <person name="Kuhara S."/>
            <person name="Hattori M."/>
            <person name="Ohta T."/>
        </authorList>
    </citation>
    <scope>NUCLEOTIDE SEQUENCE [LARGE SCALE GENOMIC DNA]</scope>
    <source>
        <strain>ATCC 15305 / DSM 20229 / NCIMB 8711 / NCTC 7292 / S-41</strain>
    </source>
</reference>